<proteinExistence type="inferred from homology"/>
<protein>
    <recommendedName>
        <fullName evidence="1">Small ribosomal subunit protein uS11</fullName>
    </recommendedName>
    <alternativeName>
        <fullName evidence="2">30S ribosomal protein S11</fullName>
    </alternativeName>
</protein>
<feature type="chain" id="PRO_1000141110" description="Small ribosomal subunit protein uS11">
    <location>
        <begin position="1"/>
        <end position="129"/>
    </location>
</feature>
<accession>B1LWQ1</accession>
<sequence>MAKEPQRVRRRERKNIVSGVAHVNASFNNTMITITDAQGNTISWSSAGAMGFKGSRKSTPYAAQVAAEDAGRKAAEHGMRTLEVEVSGPGSGRESALRALQAAGFTVTSIRDVTSIPHNGCRPRKRRRV</sequence>
<evidence type="ECO:0000255" key="1">
    <source>
        <dbReference type="HAMAP-Rule" id="MF_01310"/>
    </source>
</evidence>
<evidence type="ECO:0000305" key="2"/>
<dbReference type="EMBL" id="CP001001">
    <property type="protein sequence ID" value="ACB24188.1"/>
    <property type="molecule type" value="Genomic_DNA"/>
</dbReference>
<dbReference type="RefSeq" id="WP_010686167.1">
    <property type="nucleotide sequence ID" value="NC_010505.1"/>
</dbReference>
<dbReference type="SMR" id="B1LWQ1"/>
<dbReference type="STRING" id="426355.Mrad2831_2193"/>
<dbReference type="GeneID" id="96604879"/>
<dbReference type="KEGG" id="mrd:Mrad2831_2193"/>
<dbReference type="eggNOG" id="COG0100">
    <property type="taxonomic scope" value="Bacteria"/>
</dbReference>
<dbReference type="HOGENOM" id="CLU_072439_5_0_5"/>
<dbReference type="OrthoDB" id="9806415at2"/>
<dbReference type="Proteomes" id="UP000006589">
    <property type="component" value="Chromosome"/>
</dbReference>
<dbReference type="GO" id="GO:1990904">
    <property type="term" value="C:ribonucleoprotein complex"/>
    <property type="evidence" value="ECO:0007669"/>
    <property type="project" value="UniProtKB-KW"/>
</dbReference>
<dbReference type="GO" id="GO:0005840">
    <property type="term" value="C:ribosome"/>
    <property type="evidence" value="ECO:0007669"/>
    <property type="project" value="UniProtKB-KW"/>
</dbReference>
<dbReference type="GO" id="GO:0019843">
    <property type="term" value="F:rRNA binding"/>
    <property type="evidence" value="ECO:0007669"/>
    <property type="project" value="UniProtKB-UniRule"/>
</dbReference>
<dbReference type="GO" id="GO:0003735">
    <property type="term" value="F:structural constituent of ribosome"/>
    <property type="evidence" value="ECO:0007669"/>
    <property type="project" value="InterPro"/>
</dbReference>
<dbReference type="GO" id="GO:0006412">
    <property type="term" value="P:translation"/>
    <property type="evidence" value="ECO:0007669"/>
    <property type="project" value="UniProtKB-UniRule"/>
</dbReference>
<dbReference type="FunFam" id="3.30.420.80:FF:000001">
    <property type="entry name" value="30S ribosomal protein S11"/>
    <property type="match status" value="1"/>
</dbReference>
<dbReference type="Gene3D" id="3.30.420.80">
    <property type="entry name" value="Ribosomal protein S11"/>
    <property type="match status" value="1"/>
</dbReference>
<dbReference type="HAMAP" id="MF_01310">
    <property type="entry name" value="Ribosomal_uS11"/>
    <property type="match status" value="1"/>
</dbReference>
<dbReference type="InterPro" id="IPR001971">
    <property type="entry name" value="Ribosomal_uS11"/>
</dbReference>
<dbReference type="InterPro" id="IPR019981">
    <property type="entry name" value="Ribosomal_uS11_bac-type"/>
</dbReference>
<dbReference type="InterPro" id="IPR018102">
    <property type="entry name" value="Ribosomal_uS11_CS"/>
</dbReference>
<dbReference type="InterPro" id="IPR036967">
    <property type="entry name" value="Ribosomal_uS11_sf"/>
</dbReference>
<dbReference type="NCBIfam" id="NF003698">
    <property type="entry name" value="PRK05309.1"/>
    <property type="match status" value="1"/>
</dbReference>
<dbReference type="NCBIfam" id="TIGR03632">
    <property type="entry name" value="uS11_bact"/>
    <property type="match status" value="1"/>
</dbReference>
<dbReference type="PANTHER" id="PTHR11759">
    <property type="entry name" value="40S RIBOSOMAL PROTEIN S14/30S RIBOSOMAL PROTEIN S11"/>
    <property type="match status" value="1"/>
</dbReference>
<dbReference type="Pfam" id="PF00411">
    <property type="entry name" value="Ribosomal_S11"/>
    <property type="match status" value="1"/>
</dbReference>
<dbReference type="PIRSF" id="PIRSF002131">
    <property type="entry name" value="Ribosomal_S11"/>
    <property type="match status" value="1"/>
</dbReference>
<dbReference type="SUPFAM" id="SSF53137">
    <property type="entry name" value="Translational machinery components"/>
    <property type="match status" value="1"/>
</dbReference>
<dbReference type="PROSITE" id="PS00054">
    <property type="entry name" value="RIBOSOMAL_S11"/>
    <property type="match status" value="1"/>
</dbReference>
<reference key="1">
    <citation type="submission" date="2008-03" db="EMBL/GenBank/DDBJ databases">
        <title>Complete sequence of chromosome of Methylobacterium radiotolerans JCM 2831.</title>
        <authorList>
            <consortium name="US DOE Joint Genome Institute"/>
            <person name="Copeland A."/>
            <person name="Lucas S."/>
            <person name="Lapidus A."/>
            <person name="Glavina del Rio T."/>
            <person name="Dalin E."/>
            <person name="Tice H."/>
            <person name="Bruce D."/>
            <person name="Goodwin L."/>
            <person name="Pitluck S."/>
            <person name="Kiss H."/>
            <person name="Brettin T."/>
            <person name="Detter J.C."/>
            <person name="Han C."/>
            <person name="Kuske C.R."/>
            <person name="Schmutz J."/>
            <person name="Larimer F."/>
            <person name="Land M."/>
            <person name="Hauser L."/>
            <person name="Kyrpides N."/>
            <person name="Mikhailova N."/>
            <person name="Marx C.J."/>
            <person name="Richardson P."/>
        </authorList>
    </citation>
    <scope>NUCLEOTIDE SEQUENCE [LARGE SCALE GENOMIC DNA]</scope>
    <source>
        <strain>ATCC 27329 / DSM 1819 / JCM 2831 / NBRC 15690 / NCIMB 10815 / 0-1</strain>
    </source>
</reference>
<comment type="function">
    <text evidence="1">Located on the platform of the 30S subunit, it bridges several disparate RNA helices of the 16S rRNA. Forms part of the Shine-Dalgarno cleft in the 70S ribosome.</text>
</comment>
<comment type="subunit">
    <text evidence="1">Part of the 30S ribosomal subunit. Interacts with proteins S7 and S18. Binds to IF-3.</text>
</comment>
<comment type="similarity">
    <text evidence="1">Belongs to the universal ribosomal protein uS11 family.</text>
</comment>
<keyword id="KW-0687">Ribonucleoprotein</keyword>
<keyword id="KW-0689">Ribosomal protein</keyword>
<keyword id="KW-0694">RNA-binding</keyword>
<keyword id="KW-0699">rRNA-binding</keyword>
<gene>
    <name evidence="1" type="primary">rpsK</name>
    <name type="ordered locus">Mrad2831_2193</name>
</gene>
<name>RS11_METRJ</name>
<organism>
    <name type="scientific">Methylobacterium radiotolerans (strain ATCC 27329 / DSM 1819 / JCM 2831 / NBRC 15690 / NCIMB 10815 / 0-1)</name>
    <dbReference type="NCBI Taxonomy" id="426355"/>
    <lineage>
        <taxon>Bacteria</taxon>
        <taxon>Pseudomonadati</taxon>
        <taxon>Pseudomonadota</taxon>
        <taxon>Alphaproteobacteria</taxon>
        <taxon>Hyphomicrobiales</taxon>
        <taxon>Methylobacteriaceae</taxon>
        <taxon>Methylobacterium</taxon>
    </lineage>
</organism>